<proteinExistence type="evidence at transcript level"/>
<comment type="function">
    <text evidence="1">Required for the first step of diphthamide biosynthesis, a post-translational modification of histidine which occurs in elongation factor 2 (By similarity). Dph1 and dph2 transfer a 3-amino-3-carboxypropyl (ACP) group from S-adenosyl-L-methionine (SAM) to a histidine residue, the reaction is assisted by a reduction system comprising dph3 and a NADH-dependent reductase (By similarity). Facilitates the reduction of the catalytic iron-sulfur cluster found in the dph1 subunit (By similarity).</text>
</comment>
<comment type="cofactor">
    <cofactor evidence="1">
        <name>[4Fe-4S] cluster</name>
        <dbReference type="ChEBI" id="CHEBI:49883"/>
    </cofactor>
    <text evidence="1">Binds 1 [4Fe-4S] cluster per subunit. The cluster facilitates the reduction of the catalytic iron-sulfur cluster in the dph1 subunit.</text>
</comment>
<comment type="pathway">
    <text evidence="2">Protein modification; peptidyl-diphthamide biosynthesis.</text>
</comment>
<comment type="subunit">
    <text evidence="1">Component of the 2-(3-amino-3-carboxypropyl)histidine synthase complex composed of dph1, dph2, dph3 and a NADH-dependent reductase.</text>
</comment>
<comment type="similarity">
    <text evidence="2">Belongs to the DPH1/DPH2 family. DPH2 subfamily.</text>
</comment>
<accession>A4QN59</accession>
<keyword id="KW-0408">Iron</keyword>
<keyword id="KW-0411">Iron-sulfur</keyword>
<keyword id="KW-0479">Metal-binding</keyword>
<keyword id="KW-1185">Reference proteome</keyword>
<protein>
    <recommendedName>
        <fullName evidence="2">2-(3-amino-3-carboxypropyl)histidine synthase subunit 2</fullName>
    </recommendedName>
    <alternativeName>
        <fullName>Diphthamide biosynthesis protein 2</fullName>
    </alternativeName>
    <alternativeName>
        <fullName evidence="2">Diphtheria toxin resistance protein 2</fullName>
    </alternativeName>
    <alternativeName>
        <fullName evidence="2">S-adenosyl-L-methionine:L-histidine 3-amino-3-carboxypropyltransferase 2</fullName>
    </alternativeName>
</protein>
<evidence type="ECO:0000250" key="1">
    <source>
        <dbReference type="UniProtKB" id="P32461"/>
    </source>
</evidence>
<evidence type="ECO:0000305" key="2"/>
<gene>
    <name type="primary">dph2</name>
    <name type="ORF">zgc:162269</name>
</gene>
<organism>
    <name type="scientific">Danio rerio</name>
    <name type="common">Zebrafish</name>
    <name type="synonym">Brachydanio rerio</name>
    <dbReference type="NCBI Taxonomy" id="7955"/>
    <lineage>
        <taxon>Eukaryota</taxon>
        <taxon>Metazoa</taxon>
        <taxon>Chordata</taxon>
        <taxon>Craniata</taxon>
        <taxon>Vertebrata</taxon>
        <taxon>Euteleostomi</taxon>
        <taxon>Actinopterygii</taxon>
        <taxon>Neopterygii</taxon>
        <taxon>Teleostei</taxon>
        <taxon>Ostariophysi</taxon>
        <taxon>Cypriniformes</taxon>
        <taxon>Danionidae</taxon>
        <taxon>Danioninae</taxon>
        <taxon>Danio</taxon>
    </lineage>
</organism>
<name>DPH2_DANRE</name>
<dbReference type="EMBL" id="BC134939">
    <property type="protein sequence ID" value="AAI34940.1"/>
    <property type="molecule type" value="mRNA"/>
</dbReference>
<dbReference type="RefSeq" id="NP_001082866.1">
    <property type="nucleotide sequence ID" value="NM_001089397.1"/>
</dbReference>
<dbReference type="SMR" id="A4QN59"/>
<dbReference type="FunCoup" id="A4QN59">
    <property type="interactions" value="2003"/>
</dbReference>
<dbReference type="STRING" id="7955.ENSDARP00000097722"/>
<dbReference type="PaxDb" id="7955-ENSDARP00000112114"/>
<dbReference type="PeptideAtlas" id="A4QN59"/>
<dbReference type="Ensembl" id="ENSDART00000114076">
    <property type="protein sequence ID" value="ENSDARP00000097722"/>
    <property type="gene ID" value="ENSDARG00000078077"/>
</dbReference>
<dbReference type="GeneID" id="562538"/>
<dbReference type="KEGG" id="dre:562538"/>
<dbReference type="AGR" id="ZFIN:ZDB-GENE-030219-100"/>
<dbReference type="CTD" id="1802"/>
<dbReference type="ZFIN" id="ZDB-GENE-030219-100">
    <property type="gene designation" value="dph2"/>
</dbReference>
<dbReference type="eggNOG" id="KOG2648">
    <property type="taxonomic scope" value="Eukaryota"/>
</dbReference>
<dbReference type="HOGENOM" id="CLU_015210_0_0_1"/>
<dbReference type="InParanoid" id="A4QN59"/>
<dbReference type="OMA" id="QIWNENH"/>
<dbReference type="OrthoDB" id="449241at2759"/>
<dbReference type="PhylomeDB" id="A4QN59"/>
<dbReference type="TreeFam" id="TF313832"/>
<dbReference type="Reactome" id="R-DRE-5358493">
    <property type="pathway name" value="Synthesis of diphthamide-EEF2"/>
</dbReference>
<dbReference type="UniPathway" id="UPA00559"/>
<dbReference type="PRO" id="PR:A4QN59"/>
<dbReference type="Proteomes" id="UP000000437">
    <property type="component" value="Chromosome 7"/>
</dbReference>
<dbReference type="Bgee" id="ENSDARG00000078077">
    <property type="expression patterns" value="Expressed in granulocyte and 27 other cell types or tissues"/>
</dbReference>
<dbReference type="ExpressionAtlas" id="A4QN59">
    <property type="expression patterns" value="baseline"/>
</dbReference>
<dbReference type="GO" id="GO:0120513">
    <property type="term" value="C:2-(3-amino-3-carboxypropyl)histidine synthase complex"/>
    <property type="evidence" value="ECO:0000250"/>
    <property type="project" value="UniProtKB"/>
</dbReference>
<dbReference type="GO" id="GO:0090560">
    <property type="term" value="F:2-(3-amino-3-carboxypropyl)histidine synthase activity"/>
    <property type="evidence" value="ECO:0007669"/>
    <property type="project" value="UniProtKB-EC"/>
</dbReference>
<dbReference type="GO" id="GO:0051539">
    <property type="term" value="F:4 iron, 4 sulfur cluster binding"/>
    <property type="evidence" value="ECO:0000250"/>
    <property type="project" value="UniProtKB"/>
</dbReference>
<dbReference type="GO" id="GO:0046872">
    <property type="term" value="F:metal ion binding"/>
    <property type="evidence" value="ECO:0007669"/>
    <property type="project" value="UniProtKB-KW"/>
</dbReference>
<dbReference type="GO" id="GO:0017183">
    <property type="term" value="P:protein histidyl modification to diphthamide"/>
    <property type="evidence" value="ECO:0000250"/>
    <property type="project" value="UniProtKB"/>
</dbReference>
<dbReference type="FunFam" id="3.40.50.11840:FF:000002">
    <property type="entry name" value="2-(3-amino-3-carboxypropyl)histidine synthase subunit 2"/>
    <property type="match status" value="1"/>
</dbReference>
<dbReference type="FunFam" id="3.40.50.11860:FF:000001">
    <property type="entry name" value="2-(3-amino-3-carboxypropyl)histidine synthase subunit 2"/>
    <property type="match status" value="1"/>
</dbReference>
<dbReference type="Gene3D" id="3.40.50.11840">
    <property type="entry name" value="Diphthamide synthesis DPH1/DPH2 domain 1"/>
    <property type="match status" value="1"/>
</dbReference>
<dbReference type="Gene3D" id="3.40.50.11860">
    <property type="entry name" value="Diphthamide synthesis DPH1/DPH2 domain 3"/>
    <property type="match status" value="1"/>
</dbReference>
<dbReference type="InterPro" id="IPR010014">
    <property type="entry name" value="DHP2"/>
</dbReference>
<dbReference type="InterPro" id="IPR016435">
    <property type="entry name" value="DPH1/DPH2"/>
</dbReference>
<dbReference type="InterPro" id="IPR042263">
    <property type="entry name" value="DPH1/DPH2_1"/>
</dbReference>
<dbReference type="InterPro" id="IPR042265">
    <property type="entry name" value="DPH1/DPH2_3"/>
</dbReference>
<dbReference type="NCBIfam" id="TIGR00322">
    <property type="entry name" value="diphth2_R"/>
    <property type="match status" value="1"/>
</dbReference>
<dbReference type="NCBIfam" id="TIGR00272">
    <property type="entry name" value="DPH2"/>
    <property type="match status" value="1"/>
</dbReference>
<dbReference type="PANTHER" id="PTHR10762:SF2">
    <property type="entry name" value="2-(3-AMINO-3-CARBOXYPROPYL)HISTIDINE SYNTHASE SUBUNIT 2"/>
    <property type="match status" value="1"/>
</dbReference>
<dbReference type="PANTHER" id="PTHR10762">
    <property type="entry name" value="DIPHTHAMIDE BIOSYNTHESIS PROTEIN"/>
    <property type="match status" value="1"/>
</dbReference>
<dbReference type="Pfam" id="PF01866">
    <property type="entry name" value="Diphthamide_syn"/>
    <property type="match status" value="1"/>
</dbReference>
<dbReference type="SFLD" id="SFLDG01121">
    <property type="entry name" value="Diphthamide_biosynthesis"/>
    <property type="match status" value="1"/>
</dbReference>
<dbReference type="SFLD" id="SFLDF00408">
    <property type="entry name" value="Diphthamide_biosynthesis_famil"/>
    <property type="match status" value="1"/>
</dbReference>
<dbReference type="SFLD" id="SFLDS00032">
    <property type="entry name" value="Radical_SAM_3-amino-3-carboxyp"/>
    <property type="match status" value="1"/>
</dbReference>
<reference key="1">
    <citation type="submission" date="2007-03" db="EMBL/GenBank/DDBJ databases">
        <authorList>
            <consortium name="NIH - Zebrafish Gene Collection (ZGC) project"/>
        </authorList>
    </citation>
    <scope>NUCLEOTIDE SEQUENCE [LARGE SCALE MRNA]</scope>
    <source>
        <strain>AB</strain>
        <tissue>Ovary</tissue>
    </source>
</reference>
<sequence>MTDAFSSSSEAVLQRSVTSTHSFHPSGDLLLLYQTPETCRFITSNHFKKVALQFPDELLPDAVRVSAEIEDKTKAKTYILGDTSYGSCCVDEVAAEHVGADCIVHYGSSCLSPCRRLPLLYVFGKRPIDVHQCASSFKELYPNLQSHIIVLFDVTYSHAIDDLRTLLCDVYPNVVVSRLKTDHSCGAELIQDSCVDLQSNDDGVIFKFGRQFRIKEGQTVNDYSIFYIGQEGLTLTNFMMSWNNCVFSSFNPETSTGRVESVQINKALMKRYYAIERAKDASVVGILVGTLGVANYLIIIEQLKDTIQRAGKKSYMFAMGKINVPKLANFLEIDIYVLVACPENSLLDSSEFYRPVVTPFEMELACNKHREWTGEYVTDFRELLPGGSSHVGFPEPSQSATEEETTDVSLITGALRSCSTNSSEMMHNSETSSLVLRNQTLTVANTNAAASFLAGRSWQGLEPKLGQTPVVKAVKGQRGIAIAYEEEGNEDASTQQKL</sequence>
<feature type="chain" id="PRO_0000307894" description="2-(3-amino-3-carboxypropyl)histidine synthase subunit 2">
    <location>
        <begin position="1"/>
        <end position="498"/>
    </location>
</feature>
<feature type="binding site" evidence="1">
    <location>
        <position position="89"/>
    </location>
    <ligand>
        <name>[4Fe-4S] cluster</name>
        <dbReference type="ChEBI" id="CHEBI:49883"/>
    </ligand>
</feature>
<feature type="binding site" evidence="1">
    <location>
        <position position="110"/>
    </location>
    <ligand>
        <name>[4Fe-4S] cluster</name>
        <dbReference type="ChEBI" id="CHEBI:49883"/>
    </ligand>
</feature>
<feature type="binding site" evidence="1">
    <location>
        <position position="341"/>
    </location>
    <ligand>
        <name>[4Fe-4S] cluster</name>
        <dbReference type="ChEBI" id="CHEBI:49883"/>
    </ligand>
</feature>